<dbReference type="EC" id="2.7.1.148" evidence="1"/>
<dbReference type="EMBL" id="AE017126">
    <property type="protein sequence ID" value="AAP99808.1"/>
    <property type="molecule type" value="Genomic_DNA"/>
</dbReference>
<dbReference type="RefSeq" id="NP_875156.1">
    <property type="nucleotide sequence ID" value="NC_005042.1"/>
</dbReference>
<dbReference type="RefSeq" id="WP_011124916.1">
    <property type="nucleotide sequence ID" value="NC_005042.1"/>
</dbReference>
<dbReference type="SMR" id="Q7VCH6"/>
<dbReference type="STRING" id="167539.Pro_0764"/>
<dbReference type="EnsemblBacteria" id="AAP99808">
    <property type="protein sequence ID" value="AAP99808"/>
    <property type="gene ID" value="Pro_0764"/>
</dbReference>
<dbReference type="KEGG" id="pma:Pro_0764"/>
<dbReference type="PATRIC" id="fig|167539.5.peg.808"/>
<dbReference type="eggNOG" id="COG1947">
    <property type="taxonomic scope" value="Bacteria"/>
</dbReference>
<dbReference type="HOGENOM" id="CLU_053057_1_1_3"/>
<dbReference type="OrthoDB" id="9809438at2"/>
<dbReference type="UniPathway" id="UPA00056">
    <property type="reaction ID" value="UER00094"/>
</dbReference>
<dbReference type="Proteomes" id="UP000001420">
    <property type="component" value="Chromosome"/>
</dbReference>
<dbReference type="GO" id="GO:0050515">
    <property type="term" value="F:4-(cytidine 5'-diphospho)-2-C-methyl-D-erythritol kinase activity"/>
    <property type="evidence" value="ECO:0007669"/>
    <property type="project" value="UniProtKB-UniRule"/>
</dbReference>
<dbReference type="GO" id="GO:0005524">
    <property type="term" value="F:ATP binding"/>
    <property type="evidence" value="ECO:0007669"/>
    <property type="project" value="UniProtKB-UniRule"/>
</dbReference>
<dbReference type="GO" id="GO:0019288">
    <property type="term" value="P:isopentenyl diphosphate biosynthetic process, methylerythritol 4-phosphate pathway"/>
    <property type="evidence" value="ECO:0007669"/>
    <property type="project" value="UniProtKB-UniRule"/>
</dbReference>
<dbReference type="GO" id="GO:0016114">
    <property type="term" value="P:terpenoid biosynthetic process"/>
    <property type="evidence" value="ECO:0007669"/>
    <property type="project" value="InterPro"/>
</dbReference>
<dbReference type="Gene3D" id="3.30.230.10">
    <property type="match status" value="1"/>
</dbReference>
<dbReference type="Gene3D" id="3.30.70.890">
    <property type="entry name" value="GHMP kinase, C-terminal domain"/>
    <property type="match status" value="1"/>
</dbReference>
<dbReference type="HAMAP" id="MF_00061">
    <property type="entry name" value="IspE"/>
    <property type="match status" value="1"/>
</dbReference>
<dbReference type="InterPro" id="IPR013750">
    <property type="entry name" value="GHMP_kinase_C_dom"/>
</dbReference>
<dbReference type="InterPro" id="IPR036554">
    <property type="entry name" value="GHMP_kinase_C_sf"/>
</dbReference>
<dbReference type="InterPro" id="IPR006204">
    <property type="entry name" value="GHMP_kinase_N_dom"/>
</dbReference>
<dbReference type="InterPro" id="IPR004424">
    <property type="entry name" value="IspE"/>
</dbReference>
<dbReference type="InterPro" id="IPR020568">
    <property type="entry name" value="Ribosomal_Su5_D2-typ_SF"/>
</dbReference>
<dbReference type="InterPro" id="IPR014721">
    <property type="entry name" value="Ribsml_uS5_D2-typ_fold_subgr"/>
</dbReference>
<dbReference type="NCBIfam" id="TIGR00154">
    <property type="entry name" value="ispE"/>
    <property type="match status" value="1"/>
</dbReference>
<dbReference type="PANTHER" id="PTHR43527">
    <property type="entry name" value="4-DIPHOSPHOCYTIDYL-2-C-METHYL-D-ERYTHRITOL KINASE, CHLOROPLASTIC"/>
    <property type="match status" value="1"/>
</dbReference>
<dbReference type="PANTHER" id="PTHR43527:SF2">
    <property type="entry name" value="4-DIPHOSPHOCYTIDYL-2-C-METHYL-D-ERYTHRITOL KINASE, CHLOROPLASTIC"/>
    <property type="match status" value="1"/>
</dbReference>
<dbReference type="Pfam" id="PF08544">
    <property type="entry name" value="GHMP_kinases_C"/>
    <property type="match status" value="1"/>
</dbReference>
<dbReference type="Pfam" id="PF00288">
    <property type="entry name" value="GHMP_kinases_N"/>
    <property type="match status" value="1"/>
</dbReference>
<dbReference type="PIRSF" id="PIRSF010376">
    <property type="entry name" value="IspE"/>
    <property type="match status" value="1"/>
</dbReference>
<dbReference type="SUPFAM" id="SSF55060">
    <property type="entry name" value="GHMP Kinase, C-terminal domain"/>
    <property type="match status" value="1"/>
</dbReference>
<dbReference type="SUPFAM" id="SSF54211">
    <property type="entry name" value="Ribosomal protein S5 domain 2-like"/>
    <property type="match status" value="1"/>
</dbReference>
<keyword id="KW-0067">ATP-binding</keyword>
<keyword id="KW-0414">Isoprene biosynthesis</keyword>
<keyword id="KW-0418">Kinase</keyword>
<keyword id="KW-0547">Nucleotide-binding</keyword>
<keyword id="KW-1185">Reference proteome</keyword>
<keyword id="KW-0808">Transferase</keyword>
<name>ISPE_PROMA</name>
<feature type="chain" id="PRO_0000189246" description="4-diphosphocytidyl-2-C-methyl-D-erythritol kinase">
    <location>
        <begin position="1"/>
        <end position="319"/>
    </location>
</feature>
<feature type="active site" evidence="1">
    <location>
        <position position="21"/>
    </location>
</feature>
<feature type="active site" evidence="1">
    <location>
        <position position="148"/>
    </location>
</feature>
<feature type="binding site" evidence="1">
    <location>
        <begin position="106"/>
        <end position="116"/>
    </location>
    <ligand>
        <name>ATP</name>
        <dbReference type="ChEBI" id="CHEBI:30616"/>
    </ligand>
</feature>
<accession>Q7VCH6</accession>
<comment type="function">
    <text evidence="1">Catalyzes the phosphorylation of the position 2 hydroxy group of 4-diphosphocytidyl-2C-methyl-D-erythritol.</text>
</comment>
<comment type="catalytic activity">
    <reaction evidence="1">
        <text>4-CDP-2-C-methyl-D-erythritol + ATP = 4-CDP-2-C-methyl-D-erythritol 2-phosphate + ADP + H(+)</text>
        <dbReference type="Rhea" id="RHEA:18437"/>
        <dbReference type="ChEBI" id="CHEBI:15378"/>
        <dbReference type="ChEBI" id="CHEBI:30616"/>
        <dbReference type="ChEBI" id="CHEBI:57823"/>
        <dbReference type="ChEBI" id="CHEBI:57919"/>
        <dbReference type="ChEBI" id="CHEBI:456216"/>
        <dbReference type="EC" id="2.7.1.148"/>
    </reaction>
</comment>
<comment type="pathway">
    <text evidence="1">Isoprenoid biosynthesis; isopentenyl diphosphate biosynthesis via DXP pathway; isopentenyl diphosphate from 1-deoxy-D-xylulose 5-phosphate: step 3/6.</text>
</comment>
<comment type="similarity">
    <text evidence="1">Belongs to the GHMP kinase family. IspE subfamily.</text>
</comment>
<organism>
    <name type="scientific">Prochlorococcus marinus (strain SARG / CCMP1375 / SS120)</name>
    <dbReference type="NCBI Taxonomy" id="167539"/>
    <lineage>
        <taxon>Bacteria</taxon>
        <taxon>Bacillati</taxon>
        <taxon>Cyanobacteriota</taxon>
        <taxon>Cyanophyceae</taxon>
        <taxon>Synechococcales</taxon>
        <taxon>Prochlorococcaceae</taxon>
        <taxon>Prochlorococcus</taxon>
    </lineage>
</organism>
<sequence length="319" mass="34635">MNINYSELSSSRSLSVIAPAKINLHLEVLGFRKDGFHELAMLMQSINLFDEIDFLKTDNGEITLTSDDPNLSTGDDNLILKAAQLIQTCSSDKNVGAEIHLKKNIPIGAGLAGGSSDAAATLVGLNSLWGIGSSEKQLEKLGSELGSDVPFCLRGGTQFCFGRGESLEMIPEIKQSMAVVLVKDPLVEVSTPWAYSKFKEIYGNDYLKMEEDFEKRRQSLRDASWLNPLNCTNPPPLQNDLQKVIEPITPAVRNALEFLSSLEGVLSLAMSGSGPSCFGIFADLNGAQIALEENRNKLKLSGLDAWCCAFKSSGVSLRL</sequence>
<proteinExistence type="inferred from homology"/>
<protein>
    <recommendedName>
        <fullName evidence="1">4-diphosphocytidyl-2-C-methyl-D-erythritol kinase</fullName>
        <shortName evidence="1">CMK</shortName>
        <ecNumber evidence="1">2.7.1.148</ecNumber>
    </recommendedName>
    <alternativeName>
        <fullName evidence="1">4-(cytidine-5'-diphospho)-2-C-methyl-D-erythritol kinase</fullName>
    </alternativeName>
</protein>
<reference key="1">
    <citation type="journal article" date="2003" name="Proc. Natl. Acad. Sci. U.S.A.">
        <title>Genome sequence of the cyanobacterium Prochlorococcus marinus SS120, a nearly minimal oxyphototrophic genome.</title>
        <authorList>
            <person name="Dufresne A."/>
            <person name="Salanoubat M."/>
            <person name="Partensky F."/>
            <person name="Artiguenave F."/>
            <person name="Axmann I.M."/>
            <person name="Barbe V."/>
            <person name="Duprat S."/>
            <person name="Galperin M.Y."/>
            <person name="Koonin E.V."/>
            <person name="Le Gall F."/>
            <person name="Makarova K.S."/>
            <person name="Ostrowski M."/>
            <person name="Oztas S."/>
            <person name="Robert C."/>
            <person name="Rogozin I.B."/>
            <person name="Scanlan D.J."/>
            <person name="Tandeau de Marsac N."/>
            <person name="Weissenbach J."/>
            <person name="Wincker P."/>
            <person name="Wolf Y.I."/>
            <person name="Hess W.R."/>
        </authorList>
    </citation>
    <scope>NUCLEOTIDE SEQUENCE [LARGE SCALE GENOMIC DNA]</scope>
    <source>
        <strain>SARG / CCMP1375 / SS120</strain>
    </source>
</reference>
<gene>
    <name evidence="1" type="primary">ispE</name>
    <name type="ordered locus">Pro_0764</name>
</gene>
<evidence type="ECO:0000255" key="1">
    <source>
        <dbReference type="HAMAP-Rule" id="MF_00061"/>
    </source>
</evidence>